<protein>
    <recommendedName>
        <fullName>Uncharacterized WD repeat-containing protein C63.06</fullName>
    </recommendedName>
</protein>
<gene>
    <name type="ORF">SPCC63.06</name>
</gene>
<reference key="1">
    <citation type="journal article" date="2002" name="Nature">
        <title>The genome sequence of Schizosaccharomyces pombe.</title>
        <authorList>
            <person name="Wood V."/>
            <person name="Gwilliam R."/>
            <person name="Rajandream M.A."/>
            <person name="Lyne M.H."/>
            <person name="Lyne R."/>
            <person name="Stewart A."/>
            <person name="Sgouros J.G."/>
            <person name="Peat N."/>
            <person name="Hayles J."/>
            <person name="Baker S.G."/>
            <person name="Basham D."/>
            <person name="Bowman S."/>
            <person name="Brooks K."/>
            <person name="Brown D."/>
            <person name="Brown S."/>
            <person name="Chillingworth T."/>
            <person name="Churcher C.M."/>
            <person name="Collins M."/>
            <person name="Connor R."/>
            <person name="Cronin A."/>
            <person name="Davis P."/>
            <person name="Feltwell T."/>
            <person name="Fraser A."/>
            <person name="Gentles S."/>
            <person name="Goble A."/>
            <person name="Hamlin N."/>
            <person name="Harris D.E."/>
            <person name="Hidalgo J."/>
            <person name="Hodgson G."/>
            <person name="Holroyd S."/>
            <person name="Hornsby T."/>
            <person name="Howarth S."/>
            <person name="Huckle E.J."/>
            <person name="Hunt S."/>
            <person name="Jagels K."/>
            <person name="James K.D."/>
            <person name="Jones L."/>
            <person name="Jones M."/>
            <person name="Leather S."/>
            <person name="McDonald S."/>
            <person name="McLean J."/>
            <person name="Mooney P."/>
            <person name="Moule S."/>
            <person name="Mungall K.L."/>
            <person name="Murphy L.D."/>
            <person name="Niblett D."/>
            <person name="Odell C."/>
            <person name="Oliver K."/>
            <person name="O'Neil S."/>
            <person name="Pearson D."/>
            <person name="Quail M.A."/>
            <person name="Rabbinowitsch E."/>
            <person name="Rutherford K.M."/>
            <person name="Rutter S."/>
            <person name="Saunders D."/>
            <person name="Seeger K."/>
            <person name="Sharp S."/>
            <person name="Skelton J."/>
            <person name="Simmonds M.N."/>
            <person name="Squares R."/>
            <person name="Squares S."/>
            <person name="Stevens K."/>
            <person name="Taylor K."/>
            <person name="Taylor R.G."/>
            <person name="Tivey A."/>
            <person name="Walsh S.V."/>
            <person name="Warren T."/>
            <person name="Whitehead S."/>
            <person name="Woodward J.R."/>
            <person name="Volckaert G."/>
            <person name="Aert R."/>
            <person name="Robben J."/>
            <person name="Grymonprez B."/>
            <person name="Weltjens I."/>
            <person name="Vanstreels E."/>
            <person name="Rieger M."/>
            <person name="Schaefer M."/>
            <person name="Mueller-Auer S."/>
            <person name="Gabel C."/>
            <person name="Fuchs M."/>
            <person name="Duesterhoeft A."/>
            <person name="Fritzc C."/>
            <person name="Holzer E."/>
            <person name="Moestl D."/>
            <person name="Hilbert H."/>
            <person name="Borzym K."/>
            <person name="Langer I."/>
            <person name="Beck A."/>
            <person name="Lehrach H."/>
            <person name="Reinhardt R."/>
            <person name="Pohl T.M."/>
            <person name="Eger P."/>
            <person name="Zimmermann W."/>
            <person name="Wedler H."/>
            <person name="Wambutt R."/>
            <person name="Purnelle B."/>
            <person name="Goffeau A."/>
            <person name="Cadieu E."/>
            <person name="Dreano S."/>
            <person name="Gloux S."/>
            <person name="Lelaure V."/>
            <person name="Mottier S."/>
            <person name="Galibert F."/>
            <person name="Aves S.J."/>
            <person name="Xiang Z."/>
            <person name="Hunt C."/>
            <person name="Moore K."/>
            <person name="Hurst S.M."/>
            <person name="Lucas M."/>
            <person name="Rochet M."/>
            <person name="Gaillardin C."/>
            <person name="Tallada V.A."/>
            <person name="Garzon A."/>
            <person name="Thode G."/>
            <person name="Daga R.R."/>
            <person name="Cruzado L."/>
            <person name="Jimenez J."/>
            <person name="Sanchez M."/>
            <person name="del Rey F."/>
            <person name="Benito J."/>
            <person name="Dominguez A."/>
            <person name="Revuelta J.L."/>
            <person name="Moreno S."/>
            <person name="Armstrong J."/>
            <person name="Forsburg S.L."/>
            <person name="Cerutti L."/>
            <person name="Lowe T."/>
            <person name="McCombie W.R."/>
            <person name="Paulsen I."/>
            <person name="Potashkin J."/>
            <person name="Shpakovski G.V."/>
            <person name="Ussery D."/>
            <person name="Barrell B.G."/>
            <person name="Nurse P."/>
        </authorList>
    </citation>
    <scope>NUCLEOTIDE SEQUENCE [LARGE SCALE GENOMIC DNA]</scope>
    <source>
        <strain>972 / ATCC 24843</strain>
    </source>
</reference>
<reference key="2">
    <citation type="journal article" date="2006" name="Nat. Biotechnol.">
        <title>ORFeome cloning and global analysis of protein localization in the fission yeast Schizosaccharomyces pombe.</title>
        <authorList>
            <person name="Matsuyama A."/>
            <person name="Arai R."/>
            <person name="Yashiroda Y."/>
            <person name="Shirai A."/>
            <person name="Kamata A."/>
            <person name="Sekido S."/>
            <person name="Kobayashi Y."/>
            <person name="Hashimoto A."/>
            <person name="Hamamoto M."/>
            <person name="Hiraoka Y."/>
            <person name="Horinouchi S."/>
            <person name="Yoshida M."/>
        </authorList>
    </citation>
    <scope>SUBCELLULAR LOCATION [LARGE SCALE ANALYSIS]</scope>
</reference>
<feature type="chain" id="PRO_0000316552" description="Uncharacterized WD repeat-containing protein C63.06">
    <location>
        <begin position="1"/>
        <end position="331"/>
    </location>
</feature>
<feature type="repeat" description="WD 1">
    <location>
        <begin position="53"/>
        <end position="92"/>
    </location>
</feature>
<feature type="repeat" description="WD 2">
    <location>
        <begin position="97"/>
        <end position="139"/>
    </location>
</feature>
<feature type="repeat" description="WD 3">
    <location>
        <begin position="144"/>
        <end position="184"/>
    </location>
</feature>
<feature type="repeat" description="WD 4">
    <location>
        <begin position="300"/>
        <end position="331"/>
    </location>
</feature>
<evidence type="ECO:0000269" key="1">
    <source>
    </source>
</evidence>
<name>YCJ6_SCHPO</name>
<keyword id="KW-0963">Cytoplasm</keyword>
<keyword id="KW-0539">Nucleus</keyword>
<keyword id="KW-1185">Reference proteome</keyword>
<keyword id="KW-0677">Repeat</keyword>
<keyword id="KW-0853">WD repeat</keyword>
<organism>
    <name type="scientific">Schizosaccharomyces pombe (strain 972 / ATCC 24843)</name>
    <name type="common">Fission yeast</name>
    <dbReference type="NCBI Taxonomy" id="284812"/>
    <lineage>
        <taxon>Eukaryota</taxon>
        <taxon>Fungi</taxon>
        <taxon>Dikarya</taxon>
        <taxon>Ascomycota</taxon>
        <taxon>Taphrinomycotina</taxon>
        <taxon>Schizosaccharomycetes</taxon>
        <taxon>Schizosaccharomycetales</taxon>
        <taxon>Schizosaccharomycetaceae</taxon>
        <taxon>Schizosaccharomyces</taxon>
    </lineage>
</organism>
<accession>Q9Y7T2</accession>
<sequence length="331" mass="37254">MVTASSSVRVSNEDECFIYDIEQLKDNVVVSYSTGSWSCFDKGTLLEIFKVPKAHTNITGIISCDQLNGVITCGSEGEIHLWDIRSQAKSAVRSWTQQSTPFTCIALNKKNQFATGSELTRSLASVQLWDVRSEQKLIRQWNDAHNDDITHLQFHPKDNELLLTGSVDGLVSLLDTTKEEDSTDPEEDPLLHVINHGASIHLAKFVSKKRVMVLSHMESYAMYKLKRDKDEKTWSSNELFSIDDLRAELSCSYVINEVSTSDKQFCALAFGDFSNHETKFVLVDTSTGELKKEPTKLERASEEICRAISFDVKNDVYYSGGEDGLLQAFRV</sequence>
<dbReference type="EMBL" id="CU329672">
    <property type="protein sequence ID" value="CAB40010.1"/>
    <property type="molecule type" value="Genomic_DNA"/>
</dbReference>
<dbReference type="PIR" id="T41507">
    <property type="entry name" value="T41507"/>
</dbReference>
<dbReference type="RefSeq" id="NP_587980.1">
    <property type="nucleotide sequence ID" value="NM_001022971.2"/>
</dbReference>
<dbReference type="SMR" id="Q9Y7T2"/>
<dbReference type="BioGRID" id="275377">
    <property type="interactions" value="30"/>
</dbReference>
<dbReference type="FunCoup" id="Q9Y7T2">
    <property type="interactions" value="331"/>
</dbReference>
<dbReference type="STRING" id="284812.Q9Y7T2"/>
<dbReference type="PaxDb" id="4896-SPCC63.06.1"/>
<dbReference type="EnsemblFungi" id="SPCC63.06.1">
    <property type="protein sequence ID" value="SPCC63.06.1:pep"/>
    <property type="gene ID" value="SPCC63.06"/>
</dbReference>
<dbReference type="KEGG" id="spo:2538796"/>
<dbReference type="PomBase" id="SPCC63.06"/>
<dbReference type="VEuPathDB" id="FungiDB:SPCC63.06"/>
<dbReference type="eggNOG" id="KOG1188">
    <property type="taxonomic scope" value="Eukaryota"/>
</dbReference>
<dbReference type="HOGENOM" id="CLU_037323_3_0_1"/>
<dbReference type="InParanoid" id="Q9Y7T2"/>
<dbReference type="OMA" id="PLGCEYV"/>
<dbReference type="PhylomeDB" id="Q9Y7T2"/>
<dbReference type="PRO" id="PR:Q9Y7T2"/>
<dbReference type="Proteomes" id="UP000002485">
    <property type="component" value="Chromosome III"/>
</dbReference>
<dbReference type="GO" id="GO:0005829">
    <property type="term" value="C:cytosol"/>
    <property type="evidence" value="ECO:0007005"/>
    <property type="project" value="PomBase"/>
</dbReference>
<dbReference type="GO" id="GO:0005634">
    <property type="term" value="C:nucleus"/>
    <property type="evidence" value="ECO:0007005"/>
    <property type="project" value="PomBase"/>
</dbReference>
<dbReference type="Gene3D" id="2.130.10.10">
    <property type="entry name" value="YVTN repeat-like/Quinoprotein amine dehydrogenase"/>
    <property type="match status" value="2"/>
</dbReference>
<dbReference type="InterPro" id="IPR015943">
    <property type="entry name" value="WD40/YVTN_repeat-like_dom_sf"/>
</dbReference>
<dbReference type="InterPro" id="IPR036322">
    <property type="entry name" value="WD40_repeat_dom_sf"/>
</dbReference>
<dbReference type="InterPro" id="IPR001680">
    <property type="entry name" value="WD40_rpt"/>
</dbReference>
<dbReference type="InterPro" id="IPR039328">
    <property type="entry name" value="WDR89"/>
</dbReference>
<dbReference type="PANTHER" id="PTHR22889">
    <property type="entry name" value="WD REPEAT-CONTAINING PROTEIN 89"/>
    <property type="match status" value="1"/>
</dbReference>
<dbReference type="PANTHER" id="PTHR22889:SF0">
    <property type="entry name" value="WD REPEAT-CONTAINING PROTEIN 89"/>
    <property type="match status" value="1"/>
</dbReference>
<dbReference type="Pfam" id="PF00400">
    <property type="entry name" value="WD40"/>
    <property type="match status" value="1"/>
</dbReference>
<dbReference type="SMART" id="SM00320">
    <property type="entry name" value="WD40"/>
    <property type="match status" value="4"/>
</dbReference>
<dbReference type="SUPFAM" id="SSF50978">
    <property type="entry name" value="WD40 repeat-like"/>
    <property type="match status" value="1"/>
</dbReference>
<dbReference type="PROSITE" id="PS50082">
    <property type="entry name" value="WD_REPEATS_2"/>
    <property type="match status" value="1"/>
</dbReference>
<dbReference type="PROSITE" id="PS50294">
    <property type="entry name" value="WD_REPEATS_REGION"/>
    <property type="match status" value="1"/>
</dbReference>
<proteinExistence type="predicted"/>
<comment type="subcellular location">
    <subcellularLocation>
        <location evidence="1">Cytoplasm</location>
    </subcellularLocation>
    <subcellularLocation>
        <location evidence="1">Nucleus</location>
    </subcellularLocation>
</comment>